<gene>
    <name evidence="5 8" type="primary">Trm1</name>
    <name evidence="8" type="ORF">CG6388</name>
</gene>
<dbReference type="EC" id="2.1.1.216" evidence="4"/>
<dbReference type="EMBL" id="AE014134">
    <property type="protein sequence ID" value="AAF53189.1"/>
    <property type="molecule type" value="Genomic_DNA"/>
</dbReference>
<dbReference type="EMBL" id="AY051836">
    <property type="protein sequence ID" value="AAK93260.1"/>
    <property type="molecule type" value="mRNA"/>
</dbReference>
<dbReference type="RefSeq" id="NP_609566.1">
    <property type="nucleotide sequence ID" value="NM_135722.4"/>
</dbReference>
<dbReference type="SMR" id="Q9VK89"/>
<dbReference type="BioGRID" id="60703">
    <property type="interactions" value="5"/>
</dbReference>
<dbReference type="FunCoup" id="Q9VK89">
    <property type="interactions" value="2463"/>
</dbReference>
<dbReference type="IntAct" id="Q9VK89">
    <property type="interactions" value="2"/>
</dbReference>
<dbReference type="STRING" id="7227.FBpp0079949"/>
<dbReference type="PaxDb" id="7227-FBpp0079949"/>
<dbReference type="DNASU" id="34656"/>
<dbReference type="EnsemblMetazoa" id="FBtr0080367">
    <property type="protein sequence ID" value="FBpp0079949"/>
    <property type="gene ID" value="FBgn0032430"/>
</dbReference>
<dbReference type="GeneID" id="34656"/>
<dbReference type="KEGG" id="dme:Dmel_CG6388"/>
<dbReference type="UCSC" id="CG6388-RA">
    <property type="organism name" value="d. melanogaster"/>
</dbReference>
<dbReference type="AGR" id="FB:FBgn0032430"/>
<dbReference type="CTD" id="170650"/>
<dbReference type="FlyBase" id="FBgn0032430">
    <property type="gene designation" value="Trm1"/>
</dbReference>
<dbReference type="VEuPathDB" id="VectorBase:FBgn0032430"/>
<dbReference type="eggNOG" id="KOG1253">
    <property type="taxonomic scope" value="Eukaryota"/>
</dbReference>
<dbReference type="GeneTree" id="ENSGT00530000063646"/>
<dbReference type="HOGENOM" id="CLU_010862_4_1_1"/>
<dbReference type="InParanoid" id="Q9VK89"/>
<dbReference type="OMA" id="MKCCHEM"/>
<dbReference type="OrthoDB" id="6349953at2759"/>
<dbReference type="PhylomeDB" id="Q9VK89"/>
<dbReference type="BioGRID-ORCS" id="34656">
    <property type="hits" value="0 hits in 1 CRISPR screen"/>
</dbReference>
<dbReference type="GenomeRNAi" id="34656"/>
<dbReference type="PRO" id="PR:Q9VK89"/>
<dbReference type="Proteomes" id="UP000000803">
    <property type="component" value="Chromosome 2L"/>
</dbReference>
<dbReference type="Bgee" id="FBgn0032430">
    <property type="expression patterns" value="Expressed in adult Malpighian tubule (Drosophila) and 42 other cell types or tissues"/>
</dbReference>
<dbReference type="GO" id="GO:0005739">
    <property type="term" value="C:mitochondrion"/>
    <property type="evidence" value="ECO:0000250"/>
    <property type="project" value="FlyBase"/>
</dbReference>
<dbReference type="GO" id="GO:0005634">
    <property type="term" value="C:nucleus"/>
    <property type="evidence" value="ECO:0000318"/>
    <property type="project" value="GO_Central"/>
</dbReference>
<dbReference type="GO" id="GO:0160104">
    <property type="term" value="F:tRNA (guanine(26)-N2)-dimethyltransferase activity"/>
    <property type="evidence" value="ECO:0000315"/>
    <property type="project" value="FlyBase"/>
</dbReference>
<dbReference type="GO" id="GO:0000049">
    <property type="term" value="F:tRNA binding"/>
    <property type="evidence" value="ECO:0007669"/>
    <property type="project" value="UniProtKB-KW"/>
</dbReference>
<dbReference type="GO" id="GO:0002940">
    <property type="term" value="P:tRNA N2-guanine methylation"/>
    <property type="evidence" value="ECO:0000315"/>
    <property type="project" value="FlyBase"/>
</dbReference>
<dbReference type="FunFam" id="3.30.56.70:FF:000001">
    <property type="entry name" value="tRNA (guanine(26)-N(2))-dimethyltransferase"/>
    <property type="match status" value="1"/>
</dbReference>
<dbReference type="Gene3D" id="3.30.56.70">
    <property type="entry name" value="N2,N2-dimethylguanosine tRNA methyltransferase, C-terminal domain"/>
    <property type="match status" value="1"/>
</dbReference>
<dbReference type="Gene3D" id="3.40.50.150">
    <property type="entry name" value="Vaccinia Virus protein VP39"/>
    <property type="match status" value="1"/>
</dbReference>
<dbReference type="InterPro" id="IPR029063">
    <property type="entry name" value="SAM-dependent_MTases_sf"/>
</dbReference>
<dbReference type="InterPro" id="IPR002905">
    <property type="entry name" value="Trm1"/>
</dbReference>
<dbReference type="InterPro" id="IPR042296">
    <property type="entry name" value="tRNA_met_Trm1_C"/>
</dbReference>
<dbReference type="NCBIfam" id="TIGR00308">
    <property type="entry name" value="TRM1"/>
    <property type="match status" value="1"/>
</dbReference>
<dbReference type="PANTHER" id="PTHR10631">
    <property type="entry name" value="N 2 ,N 2 -DIMETHYLGUANOSINE TRNA METHYLTRANSFERASE"/>
    <property type="match status" value="1"/>
</dbReference>
<dbReference type="PANTHER" id="PTHR10631:SF3">
    <property type="entry name" value="TRNA (GUANINE(26)-N(2))-DIMETHYLTRANSFERASE"/>
    <property type="match status" value="1"/>
</dbReference>
<dbReference type="Pfam" id="PF02005">
    <property type="entry name" value="TRM"/>
    <property type="match status" value="1"/>
</dbReference>
<dbReference type="SUPFAM" id="SSF53335">
    <property type="entry name" value="S-adenosyl-L-methionine-dependent methyltransferases"/>
    <property type="match status" value="1"/>
</dbReference>
<dbReference type="PROSITE" id="PS51626">
    <property type="entry name" value="SAM_MT_TRM1"/>
    <property type="match status" value="1"/>
</dbReference>
<sequence length="578" mass="64957">MEVDEEKPQIIAENPNENVIRERNAEIVSGGNVFYNPVQEFNRDLSIAALNVYRQRLTKERSEKALKKQRKKVKEQEDEKTTPVPEDPPVYEAGTRYEDGLRILEALAATGLRSIRYAQEIAGVRQIVANDLSRQAVASINTNIRHNKVEELIEPSHSDAMTLMYLSTQPEKRFDAVDLDPYGCPNRFLDGAMQCLVDGGLLLVTATDMAVLAGNAPEACYVKYGSVPLRMKCCHEMALRILLHCIESHANRYGKYIEPLLSISADFYIRIFVRVYVGQAQCKLSMSKQSWIYQCTGCETFTLQPLGITKPNPTAGNPQQLKFGIPTGPAVNSQCEHCGHRHHLGGPIWSAPIHNPEFVQDLLTAVQETTLQSLGTQRRIVGVLSMVQEELQDVPLYYTPDKLCCVLKLEIVPMLKFRSAILHAGYRVSYSHASKNSLKTNAPPAVLWDILRSWSKRHPVNPERMIPGSPLAAILSKECTAVYEFDELHPEANPKSRKSALSRFQENPTPHWGPGTRATIMIGDNKLPKSYRNQNKKQRHKASEQQAEDDQQDTPQAVDEYDGDVEHLPKQPKLEATA</sequence>
<reference evidence="9" key="1">
    <citation type="journal article" date="2000" name="Science">
        <title>The genome sequence of Drosophila melanogaster.</title>
        <authorList>
            <person name="Adams M.D."/>
            <person name="Celniker S.E."/>
            <person name="Holt R.A."/>
            <person name="Evans C.A."/>
            <person name="Gocayne J.D."/>
            <person name="Amanatides P.G."/>
            <person name="Scherer S.E."/>
            <person name="Li P.W."/>
            <person name="Hoskins R.A."/>
            <person name="Galle R.F."/>
            <person name="George R.A."/>
            <person name="Lewis S.E."/>
            <person name="Richards S."/>
            <person name="Ashburner M."/>
            <person name="Henderson S.N."/>
            <person name="Sutton G.G."/>
            <person name="Wortman J.R."/>
            <person name="Yandell M.D."/>
            <person name="Zhang Q."/>
            <person name="Chen L.X."/>
            <person name="Brandon R.C."/>
            <person name="Rogers Y.-H.C."/>
            <person name="Blazej R.G."/>
            <person name="Champe M."/>
            <person name="Pfeiffer B.D."/>
            <person name="Wan K.H."/>
            <person name="Doyle C."/>
            <person name="Baxter E.G."/>
            <person name="Helt G."/>
            <person name="Nelson C.R."/>
            <person name="Miklos G.L.G."/>
            <person name="Abril J.F."/>
            <person name="Agbayani A."/>
            <person name="An H.-J."/>
            <person name="Andrews-Pfannkoch C."/>
            <person name="Baldwin D."/>
            <person name="Ballew R.M."/>
            <person name="Basu A."/>
            <person name="Baxendale J."/>
            <person name="Bayraktaroglu L."/>
            <person name="Beasley E.M."/>
            <person name="Beeson K.Y."/>
            <person name="Benos P.V."/>
            <person name="Berman B.P."/>
            <person name="Bhandari D."/>
            <person name="Bolshakov S."/>
            <person name="Borkova D."/>
            <person name="Botchan M.R."/>
            <person name="Bouck J."/>
            <person name="Brokstein P."/>
            <person name="Brottier P."/>
            <person name="Burtis K.C."/>
            <person name="Busam D.A."/>
            <person name="Butler H."/>
            <person name="Cadieu E."/>
            <person name="Center A."/>
            <person name="Chandra I."/>
            <person name="Cherry J.M."/>
            <person name="Cawley S."/>
            <person name="Dahlke C."/>
            <person name="Davenport L.B."/>
            <person name="Davies P."/>
            <person name="de Pablos B."/>
            <person name="Delcher A."/>
            <person name="Deng Z."/>
            <person name="Mays A.D."/>
            <person name="Dew I."/>
            <person name="Dietz S.M."/>
            <person name="Dodson K."/>
            <person name="Doup L.E."/>
            <person name="Downes M."/>
            <person name="Dugan-Rocha S."/>
            <person name="Dunkov B.C."/>
            <person name="Dunn P."/>
            <person name="Durbin K.J."/>
            <person name="Evangelista C.C."/>
            <person name="Ferraz C."/>
            <person name="Ferriera S."/>
            <person name="Fleischmann W."/>
            <person name="Fosler C."/>
            <person name="Gabrielian A.E."/>
            <person name="Garg N.S."/>
            <person name="Gelbart W.M."/>
            <person name="Glasser K."/>
            <person name="Glodek A."/>
            <person name="Gong F."/>
            <person name="Gorrell J.H."/>
            <person name="Gu Z."/>
            <person name="Guan P."/>
            <person name="Harris M."/>
            <person name="Harris N.L."/>
            <person name="Harvey D.A."/>
            <person name="Heiman T.J."/>
            <person name="Hernandez J.R."/>
            <person name="Houck J."/>
            <person name="Hostin D."/>
            <person name="Houston K.A."/>
            <person name="Howland T.J."/>
            <person name="Wei M.-H."/>
            <person name="Ibegwam C."/>
            <person name="Jalali M."/>
            <person name="Kalush F."/>
            <person name="Karpen G.H."/>
            <person name="Ke Z."/>
            <person name="Kennison J.A."/>
            <person name="Ketchum K.A."/>
            <person name="Kimmel B.E."/>
            <person name="Kodira C.D."/>
            <person name="Kraft C.L."/>
            <person name="Kravitz S."/>
            <person name="Kulp D."/>
            <person name="Lai Z."/>
            <person name="Lasko P."/>
            <person name="Lei Y."/>
            <person name="Levitsky A.A."/>
            <person name="Li J.H."/>
            <person name="Li Z."/>
            <person name="Liang Y."/>
            <person name="Lin X."/>
            <person name="Liu X."/>
            <person name="Mattei B."/>
            <person name="McIntosh T.C."/>
            <person name="McLeod M.P."/>
            <person name="McPherson D."/>
            <person name="Merkulov G."/>
            <person name="Milshina N.V."/>
            <person name="Mobarry C."/>
            <person name="Morris J."/>
            <person name="Moshrefi A."/>
            <person name="Mount S.M."/>
            <person name="Moy M."/>
            <person name="Murphy B."/>
            <person name="Murphy L."/>
            <person name="Muzny D.M."/>
            <person name="Nelson D.L."/>
            <person name="Nelson D.R."/>
            <person name="Nelson K.A."/>
            <person name="Nixon K."/>
            <person name="Nusskern D.R."/>
            <person name="Pacleb J.M."/>
            <person name="Palazzolo M."/>
            <person name="Pittman G.S."/>
            <person name="Pan S."/>
            <person name="Pollard J."/>
            <person name="Puri V."/>
            <person name="Reese M.G."/>
            <person name="Reinert K."/>
            <person name="Remington K."/>
            <person name="Saunders R.D.C."/>
            <person name="Scheeler F."/>
            <person name="Shen H."/>
            <person name="Shue B.C."/>
            <person name="Siden-Kiamos I."/>
            <person name="Simpson M."/>
            <person name="Skupski M.P."/>
            <person name="Smith T.J."/>
            <person name="Spier E."/>
            <person name="Spradling A.C."/>
            <person name="Stapleton M."/>
            <person name="Strong R."/>
            <person name="Sun E."/>
            <person name="Svirskas R."/>
            <person name="Tector C."/>
            <person name="Turner R."/>
            <person name="Venter E."/>
            <person name="Wang A.H."/>
            <person name="Wang X."/>
            <person name="Wang Z.-Y."/>
            <person name="Wassarman D.A."/>
            <person name="Weinstock G.M."/>
            <person name="Weissenbach J."/>
            <person name="Williams S.M."/>
            <person name="Woodage T."/>
            <person name="Worley K.C."/>
            <person name="Wu D."/>
            <person name="Yang S."/>
            <person name="Yao Q.A."/>
            <person name="Ye J."/>
            <person name="Yeh R.-F."/>
            <person name="Zaveri J.S."/>
            <person name="Zhan M."/>
            <person name="Zhang G."/>
            <person name="Zhao Q."/>
            <person name="Zheng L."/>
            <person name="Zheng X.H."/>
            <person name="Zhong F.N."/>
            <person name="Zhong W."/>
            <person name="Zhou X."/>
            <person name="Zhu S.C."/>
            <person name="Zhu X."/>
            <person name="Smith H.O."/>
            <person name="Gibbs R.A."/>
            <person name="Myers E.W."/>
            <person name="Rubin G.M."/>
            <person name="Venter J.C."/>
        </authorList>
    </citation>
    <scope>NUCLEOTIDE SEQUENCE [LARGE SCALE GENOMIC DNA]</scope>
    <source>
        <strain evidence="9">Berkeley</strain>
    </source>
</reference>
<reference evidence="9" key="2">
    <citation type="journal article" date="2002" name="Genome Biol.">
        <title>Annotation of the Drosophila melanogaster euchromatic genome: a systematic review.</title>
        <authorList>
            <person name="Misra S."/>
            <person name="Crosby M.A."/>
            <person name="Mungall C.J."/>
            <person name="Matthews B.B."/>
            <person name="Campbell K.S."/>
            <person name="Hradecky P."/>
            <person name="Huang Y."/>
            <person name="Kaminker J.S."/>
            <person name="Millburn G.H."/>
            <person name="Prochnik S.E."/>
            <person name="Smith C.D."/>
            <person name="Tupy J.L."/>
            <person name="Whitfield E.J."/>
            <person name="Bayraktaroglu L."/>
            <person name="Berman B.P."/>
            <person name="Bettencourt B.R."/>
            <person name="Celniker S.E."/>
            <person name="de Grey A.D.N.J."/>
            <person name="Drysdale R.A."/>
            <person name="Harris N.L."/>
            <person name="Richter J."/>
            <person name="Russo S."/>
            <person name="Schroeder A.J."/>
            <person name="Shu S.Q."/>
            <person name="Stapleton M."/>
            <person name="Yamada C."/>
            <person name="Ashburner M."/>
            <person name="Gelbart W.M."/>
            <person name="Rubin G.M."/>
            <person name="Lewis S.E."/>
        </authorList>
    </citation>
    <scope>GENOME REANNOTATION</scope>
    <source>
        <strain evidence="9">Berkeley</strain>
    </source>
</reference>
<reference evidence="7" key="3">
    <citation type="journal article" date="2002" name="Genome Biol.">
        <title>A Drosophila full-length cDNA resource.</title>
        <authorList>
            <person name="Stapleton M."/>
            <person name="Carlson J.W."/>
            <person name="Brokstein P."/>
            <person name="Yu C."/>
            <person name="Champe M."/>
            <person name="George R.A."/>
            <person name="Guarin H."/>
            <person name="Kronmiller B."/>
            <person name="Pacleb J.M."/>
            <person name="Park S."/>
            <person name="Wan K.H."/>
            <person name="Rubin G.M."/>
            <person name="Celniker S.E."/>
        </authorList>
    </citation>
    <scope>NUCLEOTIDE SEQUENCE [LARGE SCALE MRNA]</scope>
    <source>
        <strain evidence="7">Berkeley</strain>
        <tissue evidence="7">Embryo</tissue>
    </source>
</reference>
<reference evidence="6" key="4">
    <citation type="journal article" date="2020" name="PLoS ONE">
        <title>Identification of the enzymes responsible for m2,2G and acp3U formation on cytosolic tRNA from insects and plants.</title>
        <authorList>
            <person name="Funk H.M."/>
            <person name="Zhao R."/>
            <person name="Thomas M."/>
            <person name="Spigelmyer S.M."/>
            <person name="Sebree N.J."/>
            <person name="Bales R.O."/>
            <person name="Burchett J.B."/>
            <person name="Mamaril J.B."/>
            <person name="Limbach P.A."/>
            <person name="Guy M.P."/>
        </authorList>
    </citation>
    <scope>FUNCTION</scope>
    <scope>CATALYTIC ACTIVITY</scope>
</reference>
<accession>Q9VK89</accession>
<feature type="chain" id="PRO_0000147674" description="tRNA (guanine(26)-N(2))-dimethyltransferase">
    <location>
        <begin position="1"/>
        <end position="578"/>
    </location>
</feature>
<feature type="domain" description="Trm1 methyltransferase" evidence="2">
    <location>
        <begin position="18"/>
        <end position="451"/>
    </location>
</feature>
<feature type="region of interest" description="Disordered" evidence="3">
    <location>
        <begin position="63"/>
        <end position="92"/>
    </location>
</feature>
<feature type="region of interest" description="Disordered" evidence="3">
    <location>
        <begin position="491"/>
        <end position="578"/>
    </location>
</feature>
<feature type="compositionally biased region" description="Basic and acidic residues" evidence="3">
    <location>
        <begin position="564"/>
        <end position="578"/>
    </location>
</feature>
<feature type="binding site" evidence="1">
    <location>
        <position position="43"/>
    </location>
    <ligand>
        <name>S-adenosyl-L-methionine</name>
        <dbReference type="ChEBI" id="CHEBI:59789"/>
    </ligand>
</feature>
<feature type="binding site" evidence="1">
    <location>
        <position position="113"/>
    </location>
    <ligand>
        <name>S-adenosyl-L-methionine</name>
        <dbReference type="ChEBI" id="CHEBI:59789"/>
    </ligand>
</feature>
<feature type="binding site" evidence="1">
    <location>
        <position position="131"/>
    </location>
    <ligand>
        <name>S-adenosyl-L-methionine</name>
        <dbReference type="ChEBI" id="CHEBI:59789"/>
    </ligand>
</feature>
<feature type="binding site" evidence="1">
    <location>
        <position position="295"/>
    </location>
    <ligand>
        <name>Zn(2+)</name>
        <dbReference type="ChEBI" id="CHEBI:29105"/>
    </ligand>
</feature>
<feature type="binding site" evidence="1">
    <location>
        <position position="298"/>
    </location>
    <ligand>
        <name>Zn(2+)</name>
        <dbReference type="ChEBI" id="CHEBI:29105"/>
    </ligand>
</feature>
<feature type="binding site" evidence="1">
    <location>
        <position position="335"/>
    </location>
    <ligand>
        <name>Zn(2+)</name>
        <dbReference type="ChEBI" id="CHEBI:29105"/>
    </ligand>
</feature>
<feature type="binding site" evidence="1">
    <location>
        <position position="338"/>
    </location>
    <ligand>
        <name>Zn(2+)</name>
        <dbReference type="ChEBI" id="CHEBI:29105"/>
    </ligand>
</feature>
<protein>
    <recommendedName>
        <fullName evidence="5">tRNA (guanine(26)-N(2))-dimethyltransferase</fullName>
        <ecNumber evidence="4">2.1.1.216</ecNumber>
    </recommendedName>
    <alternativeName>
        <fullName evidence="5">tRNA 2,2-dimethylguanosine-26 methyltransferase</fullName>
    </alternativeName>
    <alternativeName>
        <fullName evidence="5">tRNA(guanine-26,N(2)-N(2)) methyltransferase</fullName>
    </alternativeName>
    <alternativeName>
        <fullName evidence="5">tRNA(m(2,2)G26)dimethyltransferase</fullName>
    </alternativeName>
</protein>
<name>TRM1_DROME</name>
<keyword id="KW-0479">Metal-binding</keyword>
<keyword id="KW-0489">Methyltransferase</keyword>
<keyword id="KW-1185">Reference proteome</keyword>
<keyword id="KW-0694">RNA-binding</keyword>
<keyword id="KW-0949">S-adenosyl-L-methionine</keyword>
<keyword id="KW-0808">Transferase</keyword>
<keyword id="KW-0819">tRNA processing</keyword>
<keyword id="KW-0820">tRNA-binding</keyword>
<keyword id="KW-0862">Zinc</keyword>
<proteinExistence type="evidence at protein level"/>
<organism evidence="9">
    <name type="scientific">Drosophila melanogaster</name>
    <name type="common">Fruit fly</name>
    <dbReference type="NCBI Taxonomy" id="7227"/>
    <lineage>
        <taxon>Eukaryota</taxon>
        <taxon>Metazoa</taxon>
        <taxon>Ecdysozoa</taxon>
        <taxon>Arthropoda</taxon>
        <taxon>Hexapoda</taxon>
        <taxon>Insecta</taxon>
        <taxon>Pterygota</taxon>
        <taxon>Neoptera</taxon>
        <taxon>Endopterygota</taxon>
        <taxon>Diptera</taxon>
        <taxon>Brachycera</taxon>
        <taxon>Muscomorpha</taxon>
        <taxon>Ephydroidea</taxon>
        <taxon>Drosophilidae</taxon>
        <taxon>Drosophila</taxon>
        <taxon>Sophophora</taxon>
    </lineage>
</organism>
<comment type="function">
    <text evidence="4">Dimethylates a single guanine residue at position 26 of most tRNAs using S-adenosyl-L-methionine as donor of the methyl groups.</text>
</comment>
<comment type="catalytic activity">
    <reaction evidence="4">
        <text>guanosine(26) in tRNA + 2 S-adenosyl-L-methionine = N(2)-dimethylguanosine(26) in tRNA + 2 S-adenosyl-L-homocysteine + 2 H(+)</text>
        <dbReference type="Rhea" id="RHEA:43140"/>
        <dbReference type="Rhea" id="RHEA-COMP:10359"/>
        <dbReference type="Rhea" id="RHEA-COMP:10360"/>
        <dbReference type="ChEBI" id="CHEBI:15378"/>
        <dbReference type="ChEBI" id="CHEBI:57856"/>
        <dbReference type="ChEBI" id="CHEBI:59789"/>
        <dbReference type="ChEBI" id="CHEBI:74269"/>
        <dbReference type="ChEBI" id="CHEBI:74513"/>
        <dbReference type="EC" id="2.1.1.216"/>
    </reaction>
</comment>
<comment type="similarity">
    <text evidence="2">Belongs to the class I-like SAM-binding methyltransferase superfamily. Trm1 family.</text>
</comment>
<evidence type="ECO:0000250" key="1">
    <source>
        <dbReference type="UniProtKB" id="O67010"/>
    </source>
</evidence>
<evidence type="ECO:0000255" key="2">
    <source>
        <dbReference type="PROSITE-ProRule" id="PRU00958"/>
    </source>
</evidence>
<evidence type="ECO:0000256" key="3">
    <source>
        <dbReference type="SAM" id="MobiDB-lite"/>
    </source>
</evidence>
<evidence type="ECO:0000269" key="4">
    <source>
    </source>
</evidence>
<evidence type="ECO:0000303" key="5">
    <source>
    </source>
</evidence>
<evidence type="ECO:0000305" key="6"/>
<evidence type="ECO:0000312" key="7">
    <source>
        <dbReference type="EMBL" id="AAK93260.1"/>
    </source>
</evidence>
<evidence type="ECO:0000312" key="8">
    <source>
        <dbReference type="FlyBase" id="FBgn0032430"/>
    </source>
</evidence>
<evidence type="ECO:0000312" key="9">
    <source>
        <dbReference type="Proteomes" id="UP000000803"/>
    </source>
</evidence>